<accession>B3NA01</accession>
<keyword id="KW-0010">Activator</keyword>
<keyword id="KW-0217">Developmental protein</keyword>
<keyword id="KW-0539">Nucleus</keyword>
<keyword id="KW-0597">Phosphoprotein</keyword>
<keyword id="KW-0804">Transcription</keyword>
<keyword id="KW-0805">Transcription regulation</keyword>
<evidence type="ECO:0000250" key="1">
    <source>
        <dbReference type="UniProtKB" id="Q7JRJ1"/>
    </source>
</evidence>
<evidence type="ECO:0000250" key="2">
    <source>
        <dbReference type="UniProtKB" id="Q96JC9"/>
    </source>
</evidence>
<evidence type="ECO:0000255" key="3"/>
<evidence type="ECO:0000256" key="4">
    <source>
        <dbReference type="SAM" id="MobiDB-lite"/>
    </source>
</evidence>
<evidence type="ECO:0000305" key="5"/>
<evidence type="ECO:0000312" key="6">
    <source>
        <dbReference type="EMBL" id="EDV59697.1"/>
    </source>
</evidence>
<feature type="chain" id="PRO_0000386599" description="Ell-associated factor Eaf">
    <location>
        <begin position="1"/>
        <end position="508"/>
    </location>
</feature>
<feature type="region of interest" description="Disordered" evidence="4">
    <location>
        <begin position="140"/>
        <end position="226"/>
    </location>
</feature>
<feature type="region of interest" description="Disordered" evidence="4">
    <location>
        <begin position="251"/>
        <end position="508"/>
    </location>
</feature>
<feature type="compositionally biased region" description="Polar residues" evidence="4">
    <location>
        <begin position="140"/>
        <end position="150"/>
    </location>
</feature>
<feature type="compositionally biased region" description="Polar residues" evidence="4">
    <location>
        <begin position="161"/>
        <end position="190"/>
    </location>
</feature>
<feature type="compositionally biased region" description="Low complexity" evidence="4">
    <location>
        <begin position="251"/>
        <end position="268"/>
    </location>
</feature>
<feature type="compositionally biased region" description="Polar residues" evidence="4">
    <location>
        <begin position="272"/>
        <end position="281"/>
    </location>
</feature>
<feature type="compositionally biased region" description="Polar residues" evidence="4">
    <location>
        <begin position="296"/>
        <end position="313"/>
    </location>
</feature>
<feature type="compositionally biased region" description="Low complexity" evidence="4">
    <location>
        <begin position="314"/>
        <end position="341"/>
    </location>
</feature>
<feature type="compositionally biased region" description="Acidic residues" evidence="4">
    <location>
        <begin position="391"/>
        <end position="406"/>
    </location>
</feature>
<feature type="compositionally biased region" description="Low complexity" evidence="4">
    <location>
        <begin position="412"/>
        <end position="444"/>
    </location>
</feature>
<feature type="compositionally biased region" description="Low complexity" evidence="4">
    <location>
        <begin position="461"/>
        <end position="477"/>
    </location>
</feature>
<feature type="compositionally biased region" description="Low complexity" evidence="4">
    <location>
        <begin position="489"/>
        <end position="502"/>
    </location>
</feature>
<feature type="modified residue" description="Phosphoserine" evidence="1">
    <location>
        <position position="200"/>
    </location>
</feature>
<dbReference type="EMBL" id="CH954177">
    <property type="protein sequence ID" value="EDV59697.1"/>
    <property type="status" value="ALT_SEQ"/>
    <property type="molecule type" value="Genomic_DNA"/>
</dbReference>
<dbReference type="RefSeq" id="XP_001970638.2">
    <property type="nucleotide sequence ID" value="XM_001970602.2"/>
</dbReference>
<dbReference type="SMR" id="B3NA01"/>
<dbReference type="EnsemblMetazoa" id="FBtr0409958">
    <property type="protein sequence ID" value="FBpp0368409"/>
    <property type="gene ID" value="FBgn0103060"/>
</dbReference>
<dbReference type="EnsemblMetazoa" id="XM_026978618.1">
    <property type="protein sequence ID" value="XP_026834419.1"/>
    <property type="gene ID" value="LOC6543187"/>
</dbReference>
<dbReference type="EnsemblMetazoa" id="XM_026978619.1">
    <property type="protein sequence ID" value="XP_026834420.1"/>
    <property type="gene ID" value="LOC6543187"/>
</dbReference>
<dbReference type="EnsemblMetazoa" id="XM_026978620.1">
    <property type="protein sequence ID" value="XP_026834421.1"/>
    <property type="gene ID" value="LOC6543187"/>
</dbReference>
<dbReference type="eggNOG" id="KOG4795">
    <property type="taxonomic scope" value="Eukaryota"/>
</dbReference>
<dbReference type="OrthoDB" id="125903at2759"/>
<dbReference type="Proteomes" id="UP000008711">
    <property type="component" value="Unassembled WGS sequence"/>
</dbReference>
<dbReference type="GO" id="GO:0005654">
    <property type="term" value="C:nucleoplasm"/>
    <property type="evidence" value="ECO:0000250"/>
    <property type="project" value="UniProtKB"/>
</dbReference>
<dbReference type="GO" id="GO:0032783">
    <property type="term" value="C:super elongation complex"/>
    <property type="evidence" value="ECO:0007669"/>
    <property type="project" value="InterPro"/>
</dbReference>
<dbReference type="GO" id="GO:0003711">
    <property type="term" value="F:transcription elongation factor activity"/>
    <property type="evidence" value="ECO:0007669"/>
    <property type="project" value="TreeGrafter"/>
</dbReference>
<dbReference type="GO" id="GO:0045893">
    <property type="term" value="P:positive regulation of DNA-templated transcription"/>
    <property type="evidence" value="ECO:0000250"/>
    <property type="project" value="UniProtKB"/>
</dbReference>
<dbReference type="GO" id="GO:0006368">
    <property type="term" value="P:transcription elongation by RNA polymerase II"/>
    <property type="evidence" value="ECO:0007669"/>
    <property type="project" value="InterPro"/>
</dbReference>
<dbReference type="InterPro" id="IPR027093">
    <property type="entry name" value="EAF_fam"/>
</dbReference>
<dbReference type="InterPro" id="IPR019194">
    <property type="entry name" value="Tscrpt_elong_fac_Eaf_N"/>
</dbReference>
<dbReference type="PANTHER" id="PTHR15970">
    <property type="entry name" value="ELL-ASSOCIATED FACTOR EAF"/>
    <property type="match status" value="1"/>
</dbReference>
<dbReference type="PANTHER" id="PTHR15970:SF2">
    <property type="entry name" value="ELL-ASSOCIATED FACTOR EAF"/>
    <property type="match status" value="1"/>
</dbReference>
<dbReference type="Pfam" id="PF09816">
    <property type="entry name" value="EAF"/>
    <property type="match status" value="1"/>
</dbReference>
<protein>
    <recommendedName>
        <fullName evidence="1">Ell-associated factor Eaf</fullName>
    </recommendedName>
</protein>
<proteinExistence type="inferred from homology"/>
<name>EAF_DROER</name>
<gene>
    <name evidence="1" type="primary">Eaf</name>
    <name type="ORF">GG10755</name>
</gene>
<comment type="function">
    <text evidence="1">Promotes transcriptional elongation by Su(Tpl)/ELL. Essential for development (By similarity).</text>
</comment>
<comment type="subcellular location">
    <subcellularLocation>
        <location evidence="2">Nucleus</location>
    </subcellularLocation>
</comment>
<comment type="similarity">
    <text evidence="3">Belongs to the EAF family.</text>
</comment>
<comment type="sequence caution" evidence="5">
    <conflict type="erroneous gene model prediction">
        <sequence resource="EMBL-CDS" id="EDV59697"/>
    </conflict>
</comment>
<organism>
    <name type="scientific">Drosophila erecta</name>
    <name type="common">Fruit fly</name>
    <dbReference type="NCBI Taxonomy" id="7220"/>
    <lineage>
        <taxon>Eukaryota</taxon>
        <taxon>Metazoa</taxon>
        <taxon>Ecdysozoa</taxon>
        <taxon>Arthropoda</taxon>
        <taxon>Hexapoda</taxon>
        <taxon>Insecta</taxon>
        <taxon>Pterygota</taxon>
        <taxon>Neoptera</taxon>
        <taxon>Endopterygota</taxon>
        <taxon>Diptera</taxon>
        <taxon>Brachycera</taxon>
        <taxon>Muscomorpha</taxon>
        <taxon>Ephydroidea</taxon>
        <taxon>Drosophilidae</taxon>
        <taxon>Drosophila</taxon>
        <taxon>Sophophora</taxon>
    </lineage>
</organism>
<reference evidence="6" key="1">
    <citation type="journal article" date="2007" name="Nature">
        <title>Evolution of genes and genomes on the Drosophila phylogeny.</title>
        <authorList>
            <consortium name="Drosophila 12 genomes consortium"/>
        </authorList>
    </citation>
    <scope>NUCLEOTIDE SEQUENCE [LARGE SCALE GENOMIC DNA]</scope>
    <source>
        <strain evidence="6">Tucson 14021-0224.01</strain>
    </source>
</reference>
<sequence>MMMTKQKNSLAERLNIGEEVRELKLGATFNPKNTSTAFHTIKYDFKPASVDTSRMASVDVGSNNQVTVTVPNSESSGVPHTVYKGNQREYAKECLMIYDKETGAITIEKLNHNIQVKKTRNEVANKSVQLPGQNASVNMGQGQLHSQGANGSVPGPISAPGHSTGTAPKMENSTMRISTKTKVSTGSRRNNIIDFKPRNSPMQQSSPSRAVPVHRSPQSAPAWDANNAQQTLPSIPLITDDDDFGLRAALHNSGHANTSGSSTGSATGQPDFGSTSSSSHMGKQRQAPPHGHGKRQQMQQRLSPPMAQQQQPSNYGRGYNGGHNHVQQQQQRNSPQQQRPPAYGHGNSMPMDLDSTREHELTSQSVAQAAAALEQQIGGALSASSSSSESDSSDSDSGSDSDDSTEDDRPTQGQQQDHQQQQQQQVYQNHNHQQQQIAQQHLNQLPNLGLGSISPAYGSNHQHQQQMAPHQQQQKQQSGIYASNGGFPNDLLQNDLQLSSNSSDDDDE</sequence>